<sequence length="401" mass="42277">MREAFICDGIRTPIGRYGGALSSVRADDLAAIPLRELLVRNPRLDAECIDDVILGCANQAGEDNRNVARMATLLAGLPQSVSGTTINRLCGSGLDALGFAARAIKAGDGDLLIAGGVESMSRAPFVMGKAASAFSRQAEMFDTTIGWRFVNPLMAQQFGTDSMPETAENVAELLKISREDQDSFALRSQQRTAKAQSSGILAEEIVPVVLKNKKGVVTEIQHDEHLRPETTLEQLRGLKAPFRANGVITAGNASGVNDGAAALIIASEQMAAAQGLTPRARIVAMATAGVEPRLMGLGPVPATRRVLERAGLSIHDMDVIELNEAFAAQALGVLRELGLPDDAPHVNPNGGAIALGHPLGMSGARLALAASHELHRRNGRYALCTMCIGVGQGIAMILERV</sequence>
<feature type="chain" id="PRO_0000206421" description="3-oxoadipyl-CoA/3-oxo-5,6-dehydrosuberyl-CoA thiolase">
    <location>
        <begin position="1"/>
        <end position="401"/>
    </location>
</feature>
<feature type="active site" description="Acyl-thioester intermediate" evidence="1">
    <location>
        <position position="90"/>
    </location>
</feature>
<feature type="active site" description="Proton acceptor" evidence="2">
    <location>
        <position position="357"/>
    </location>
</feature>
<feature type="active site" description="Proton acceptor" evidence="2">
    <location>
        <position position="387"/>
    </location>
</feature>
<organism>
    <name type="scientific">Escherichia coli (strain K12)</name>
    <dbReference type="NCBI Taxonomy" id="83333"/>
    <lineage>
        <taxon>Bacteria</taxon>
        <taxon>Pseudomonadati</taxon>
        <taxon>Pseudomonadota</taxon>
        <taxon>Gammaproteobacteria</taxon>
        <taxon>Enterobacterales</taxon>
        <taxon>Enterobacteriaceae</taxon>
        <taxon>Escherichia</taxon>
    </lineage>
</organism>
<comment type="function">
    <text evidence="5 6 7">Catalyzes the thiolytic cleavage of the beta-keto C8 intermediate 3-oxo-5,6-dehydrosuberyl-CoA with CoA to yield the C6 intermediate 2,3-dehydroadipyl-CoA and acetyl-CoA. Besides it catalyzes also the last step of the pathway, in which 3-oxoadipyl-CoA similarly is cleaved to acetyl-CoA and succinyl-CoA.</text>
</comment>
<comment type="catalytic activity">
    <reaction evidence="5 6">
        <text>succinyl-CoA + acetyl-CoA = 3-oxoadipyl-CoA + CoA</text>
        <dbReference type="Rhea" id="RHEA:19481"/>
        <dbReference type="ChEBI" id="CHEBI:57287"/>
        <dbReference type="ChEBI" id="CHEBI:57288"/>
        <dbReference type="ChEBI" id="CHEBI:57292"/>
        <dbReference type="ChEBI" id="CHEBI:57348"/>
        <dbReference type="EC" id="2.3.1.174"/>
    </reaction>
</comment>
<comment type="catalytic activity">
    <reaction evidence="5 6">
        <text>2,3-didehydroadipoyl-CoA + acetyl-CoA = 3-oxo-5,6-didehydrosuberyl-CoA + CoA</text>
        <dbReference type="Rhea" id="RHEA:34799"/>
        <dbReference type="ChEBI" id="CHEBI:57287"/>
        <dbReference type="ChEBI" id="CHEBI:57288"/>
        <dbReference type="ChEBI" id="CHEBI:63255"/>
        <dbReference type="ChEBI" id="CHEBI:71044"/>
        <dbReference type="EC" id="2.3.1.223"/>
    </reaction>
</comment>
<comment type="pathway">
    <text>Aromatic compound metabolism; phenylacetate degradation.</text>
</comment>
<comment type="induction">
    <text evidence="3 7">Activated by cAMP receptor protein (CRP), integration host factor (IHF) and by phenylacetyl-coenzyme A (PA-CoA) that prevents PaaX from binding its target sequences. Inhibited by PaaX.</text>
</comment>
<comment type="disruption phenotype">
    <text evidence="4">Mutants are unable to use phenylacetate as a carbon source.</text>
</comment>
<comment type="similarity">
    <text evidence="8">Belongs to the thiolase-like superfamily. Thiolase family.</text>
</comment>
<evidence type="ECO:0000250" key="1"/>
<evidence type="ECO:0000255" key="2">
    <source>
        <dbReference type="PROSITE-ProRule" id="PRU10020"/>
    </source>
</evidence>
<evidence type="ECO:0000269" key="3">
    <source>
    </source>
</evidence>
<evidence type="ECO:0000269" key="4">
    <source>
    </source>
</evidence>
<evidence type="ECO:0000269" key="5">
    <source>
    </source>
</evidence>
<evidence type="ECO:0000269" key="6">
    <source>
    </source>
</evidence>
<evidence type="ECO:0000269" key="7">
    <source>
    </source>
</evidence>
<evidence type="ECO:0000305" key="8"/>
<dbReference type="EC" id="2.3.1.174" evidence="5 6"/>
<dbReference type="EC" id="2.3.1.223" evidence="5 6"/>
<dbReference type="EMBL" id="U00096">
    <property type="protein sequence ID" value="AAC74479.1"/>
    <property type="molecule type" value="Genomic_DNA"/>
</dbReference>
<dbReference type="EMBL" id="AP009048">
    <property type="protein sequence ID" value="BAA15002.1"/>
    <property type="molecule type" value="Genomic_DNA"/>
</dbReference>
<dbReference type="PIR" id="H64890">
    <property type="entry name" value="H64890"/>
</dbReference>
<dbReference type="RefSeq" id="NP_415915.1">
    <property type="nucleotide sequence ID" value="NC_000913.3"/>
</dbReference>
<dbReference type="RefSeq" id="WP_001206197.1">
    <property type="nucleotide sequence ID" value="NZ_SSZK01000012.1"/>
</dbReference>
<dbReference type="SMR" id="P0C7L2"/>
<dbReference type="BioGRID" id="4263012">
    <property type="interactions" value="245"/>
</dbReference>
<dbReference type="FunCoup" id="P0C7L2">
    <property type="interactions" value="187"/>
</dbReference>
<dbReference type="IntAct" id="P0C7L2">
    <property type="interactions" value="5"/>
</dbReference>
<dbReference type="STRING" id="511145.b1397"/>
<dbReference type="PaxDb" id="511145-b1397"/>
<dbReference type="EnsemblBacteria" id="AAC74479">
    <property type="protein sequence ID" value="AAC74479"/>
    <property type="gene ID" value="b1397"/>
</dbReference>
<dbReference type="GeneID" id="946121"/>
<dbReference type="KEGG" id="ecj:JW1392"/>
<dbReference type="KEGG" id="eco:b1397"/>
<dbReference type="KEGG" id="ecoc:C3026_08150"/>
<dbReference type="PATRIC" id="fig|1411691.4.peg.874"/>
<dbReference type="EchoBASE" id="EB3507"/>
<dbReference type="eggNOG" id="COG0183">
    <property type="taxonomic scope" value="Bacteria"/>
</dbReference>
<dbReference type="HOGENOM" id="CLU_031026_2_2_6"/>
<dbReference type="InParanoid" id="P0C7L2"/>
<dbReference type="OMA" id="MSRVPMW"/>
<dbReference type="OrthoDB" id="9764638at2"/>
<dbReference type="PhylomeDB" id="P0C7L2"/>
<dbReference type="BioCyc" id="EcoCyc:G6718-MONOMER"/>
<dbReference type="BioCyc" id="MetaCyc:G6718-MONOMER"/>
<dbReference type="UniPathway" id="UPA00930"/>
<dbReference type="PRO" id="PR:P0C7L2"/>
<dbReference type="Proteomes" id="UP000000625">
    <property type="component" value="Chromosome"/>
</dbReference>
<dbReference type="GO" id="GO:0033812">
    <property type="term" value="F:3-oxoadipyl-CoA thiolase activity"/>
    <property type="evidence" value="ECO:0000314"/>
    <property type="project" value="UniProtKB"/>
</dbReference>
<dbReference type="GO" id="GO:0003988">
    <property type="term" value="F:acetyl-CoA C-acyltransferase activity"/>
    <property type="evidence" value="ECO:0000318"/>
    <property type="project" value="GO_Central"/>
</dbReference>
<dbReference type="GO" id="GO:0016740">
    <property type="term" value="F:transferase activity"/>
    <property type="evidence" value="ECO:0000314"/>
    <property type="project" value="EcoCyc"/>
</dbReference>
<dbReference type="GO" id="GO:0019619">
    <property type="term" value="P:3,4-dihydroxybenzoate catabolic process"/>
    <property type="evidence" value="ECO:0007669"/>
    <property type="project" value="InterPro"/>
</dbReference>
<dbReference type="GO" id="GO:0006974">
    <property type="term" value="P:DNA damage response"/>
    <property type="evidence" value="ECO:0000270"/>
    <property type="project" value="EcoliWiki"/>
</dbReference>
<dbReference type="GO" id="GO:0006635">
    <property type="term" value="P:fatty acid beta-oxidation"/>
    <property type="evidence" value="ECO:0000318"/>
    <property type="project" value="GO_Central"/>
</dbReference>
<dbReference type="GO" id="GO:0010124">
    <property type="term" value="P:phenylacetate catabolic process"/>
    <property type="evidence" value="ECO:0000315"/>
    <property type="project" value="UniProtKB"/>
</dbReference>
<dbReference type="CDD" id="cd00751">
    <property type="entry name" value="thiolase"/>
    <property type="match status" value="1"/>
</dbReference>
<dbReference type="FunFam" id="3.40.47.10:FF:000010">
    <property type="entry name" value="Acetyl-CoA acetyltransferase (Thiolase)"/>
    <property type="match status" value="1"/>
</dbReference>
<dbReference type="Gene3D" id="3.40.47.10">
    <property type="match status" value="1"/>
</dbReference>
<dbReference type="InterPro" id="IPR012793">
    <property type="entry name" value="PcaF"/>
</dbReference>
<dbReference type="InterPro" id="IPR002155">
    <property type="entry name" value="Thiolase"/>
</dbReference>
<dbReference type="InterPro" id="IPR016039">
    <property type="entry name" value="Thiolase-like"/>
</dbReference>
<dbReference type="InterPro" id="IPR020615">
    <property type="entry name" value="Thiolase_acyl_enz_int_AS"/>
</dbReference>
<dbReference type="InterPro" id="IPR020610">
    <property type="entry name" value="Thiolase_AS"/>
</dbReference>
<dbReference type="InterPro" id="IPR020617">
    <property type="entry name" value="Thiolase_C"/>
</dbReference>
<dbReference type="InterPro" id="IPR020613">
    <property type="entry name" value="Thiolase_CS"/>
</dbReference>
<dbReference type="InterPro" id="IPR020616">
    <property type="entry name" value="Thiolase_N"/>
</dbReference>
<dbReference type="NCBIfam" id="TIGR01930">
    <property type="entry name" value="AcCoA-C-Actrans"/>
    <property type="match status" value="1"/>
</dbReference>
<dbReference type="NCBIfam" id="TIGR02430">
    <property type="entry name" value="pcaF"/>
    <property type="match status" value="1"/>
</dbReference>
<dbReference type="NCBIfam" id="NF006551">
    <property type="entry name" value="PRK09050.1"/>
    <property type="match status" value="1"/>
</dbReference>
<dbReference type="PANTHER" id="PTHR18919">
    <property type="entry name" value="ACETYL-COA C-ACYLTRANSFERASE"/>
    <property type="match status" value="1"/>
</dbReference>
<dbReference type="PANTHER" id="PTHR18919:SF12">
    <property type="entry name" value="ACYLTRANSFERASE RV0859-RELATED"/>
    <property type="match status" value="1"/>
</dbReference>
<dbReference type="Pfam" id="PF02803">
    <property type="entry name" value="Thiolase_C"/>
    <property type="match status" value="1"/>
</dbReference>
<dbReference type="Pfam" id="PF00108">
    <property type="entry name" value="Thiolase_N"/>
    <property type="match status" value="1"/>
</dbReference>
<dbReference type="PIRSF" id="PIRSF000429">
    <property type="entry name" value="Ac-CoA_Ac_transf"/>
    <property type="match status" value="1"/>
</dbReference>
<dbReference type="SUPFAM" id="SSF53901">
    <property type="entry name" value="Thiolase-like"/>
    <property type="match status" value="2"/>
</dbReference>
<dbReference type="PROSITE" id="PS00098">
    <property type="entry name" value="THIOLASE_1"/>
    <property type="match status" value="1"/>
</dbReference>
<dbReference type="PROSITE" id="PS00737">
    <property type="entry name" value="THIOLASE_2"/>
    <property type="match status" value="1"/>
</dbReference>
<dbReference type="PROSITE" id="PS00099">
    <property type="entry name" value="THIOLASE_3"/>
    <property type="match status" value="1"/>
</dbReference>
<reference key="1">
    <citation type="journal article" date="1996" name="DNA Res.">
        <title>A 570-kb DNA sequence of the Escherichia coli K-12 genome corresponding to the 28.0-40.1 min region on the linkage map.</title>
        <authorList>
            <person name="Aiba H."/>
            <person name="Baba T."/>
            <person name="Fujita K."/>
            <person name="Hayashi K."/>
            <person name="Inada T."/>
            <person name="Isono K."/>
            <person name="Itoh T."/>
            <person name="Kasai H."/>
            <person name="Kashimoto K."/>
            <person name="Kimura S."/>
            <person name="Kitakawa M."/>
            <person name="Kitagawa M."/>
            <person name="Makino K."/>
            <person name="Miki T."/>
            <person name="Mizobuchi K."/>
            <person name="Mori H."/>
            <person name="Mori T."/>
            <person name="Motomura K."/>
            <person name="Nakade S."/>
            <person name="Nakamura Y."/>
            <person name="Nashimoto H."/>
            <person name="Nishio Y."/>
            <person name="Oshima T."/>
            <person name="Saito N."/>
            <person name="Sampei G."/>
            <person name="Seki Y."/>
            <person name="Sivasundaram S."/>
            <person name="Tagami H."/>
            <person name="Takeda J."/>
            <person name="Takemoto K."/>
            <person name="Takeuchi Y."/>
            <person name="Wada C."/>
            <person name="Yamamoto Y."/>
            <person name="Horiuchi T."/>
        </authorList>
    </citation>
    <scope>NUCLEOTIDE SEQUENCE [LARGE SCALE GENOMIC DNA]</scope>
    <source>
        <strain>K12 / W3110 / ATCC 27325 / DSM 5911</strain>
    </source>
</reference>
<reference key="2">
    <citation type="journal article" date="1997" name="Science">
        <title>The complete genome sequence of Escherichia coli K-12.</title>
        <authorList>
            <person name="Blattner F.R."/>
            <person name="Plunkett G. III"/>
            <person name="Bloch C.A."/>
            <person name="Perna N.T."/>
            <person name="Burland V."/>
            <person name="Riley M."/>
            <person name="Collado-Vides J."/>
            <person name="Glasner J.D."/>
            <person name="Rode C.K."/>
            <person name="Mayhew G.F."/>
            <person name="Gregor J."/>
            <person name="Davis N.W."/>
            <person name="Kirkpatrick H.A."/>
            <person name="Goeden M.A."/>
            <person name="Rose D.J."/>
            <person name="Mau B."/>
            <person name="Shao Y."/>
        </authorList>
    </citation>
    <scope>NUCLEOTIDE SEQUENCE [LARGE SCALE GENOMIC DNA]</scope>
    <source>
        <strain>K12 / MG1655 / ATCC 47076</strain>
    </source>
</reference>
<reference key="3">
    <citation type="journal article" date="2006" name="Mol. Syst. Biol.">
        <title>Highly accurate genome sequences of Escherichia coli K-12 strains MG1655 and W3110.</title>
        <authorList>
            <person name="Hayashi K."/>
            <person name="Morooka N."/>
            <person name="Yamamoto Y."/>
            <person name="Fujita K."/>
            <person name="Isono K."/>
            <person name="Choi S."/>
            <person name="Ohtsubo E."/>
            <person name="Baba T."/>
            <person name="Wanner B.L."/>
            <person name="Mori H."/>
            <person name="Horiuchi T."/>
        </authorList>
    </citation>
    <scope>NUCLEOTIDE SEQUENCE [LARGE SCALE GENOMIC DNA]</scope>
    <source>
        <strain>K12 / W3110 / ATCC 27325 / DSM 5911</strain>
    </source>
</reference>
<reference key="4">
    <citation type="journal article" date="1998" name="J. Biol. Chem.">
        <title>Catabolism of phenylacetic acid in Escherichia coli. Characterization of a new aerobic hybrid pathway.</title>
        <authorList>
            <person name="Ferrandez A."/>
            <person name="Minambres B."/>
            <person name="Garcia B."/>
            <person name="Olivera E.R."/>
            <person name="Luengo J.M."/>
            <person name="Garcia J.L."/>
            <person name="Diaz E."/>
        </authorList>
    </citation>
    <scope>FUNCTION IN PHENYLACETATE CATABOLISM</scope>
    <scope>INDUCTION</scope>
    <source>
        <strain>W / ATCC 11105 / DSM 1900</strain>
    </source>
</reference>
<reference key="5">
    <citation type="journal article" date="2000" name="J. Biol. Chem.">
        <title>Transcriptional regulation of the divergent paa catabolic operons for phenylacetic acid degradation in Escherichia coli.</title>
        <authorList>
            <person name="Ferrandez A."/>
            <person name="Garcia J.L."/>
            <person name="Diaz E."/>
        </authorList>
    </citation>
    <scope>TRANSCRIPTIONAL REGULATION</scope>
</reference>
<reference key="6">
    <citation type="journal article" date="2003" name="Eur. J. Biochem.">
        <title>Functional genomics by NMR spectroscopy. Phenylacetate catabolism in Escherichia coli.</title>
        <authorList>
            <person name="Ismail W."/>
            <person name="El-Said Mohamed M."/>
            <person name="Wanner B.L."/>
            <person name="Datsenko K.A."/>
            <person name="Eisenreich W."/>
            <person name="Rohdich F."/>
            <person name="Bacher A."/>
            <person name="Fuchs G."/>
        </authorList>
    </citation>
    <scope>DISRUPTION PHENOTYPE</scope>
</reference>
<reference key="7">
    <citation type="journal article" date="2007" name="Microbiology">
        <title>Characterization of the last step of the aerobic phenylacetic acid degradation pathway.</title>
        <authorList>
            <person name="Nogales J."/>
            <person name="Macchi R."/>
            <person name="Franchi F."/>
            <person name="Barzaghi D."/>
            <person name="Fernandez C."/>
            <person name="Garcia J.L."/>
            <person name="Bertoni G."/>
            <person name="Diaz E."/>
        </authorList>
    </citation>
    <scope>FUNCTION AS A 3-OXOADIPYL-COA THIOLASE</scope>
    <scope>CATALYTIC ACTIVITY</scope>
    <source>
        <strain>K12 / MG1655 / ATCC 47076</strain>
    </source>
</reference>
<reference key="8">
    <citation type="journal article" date="2010" name="Proc. Natl. Acad. Sci. U.S.A.">
        <title>Bacterial phenylalanine and phenylacetate catabolic pathway revealed.</title>
        <authorList>
            <person name="Teufel R."/>
            <person name="Mascaraque V."/>
            <person name="Ismail W."/>
            <person name="Voss M."/>
            <person name="Perera J."/>
            <person name="Eisenreich W."/>
            <person name="Haehnel W."/>
            <person name="Fuchs G."/>
        </authorList>
    </citation>
    <scope>FUNCTION AS A BETA-KETOADIPYL-COA THIOLASE</scope>
    <scope>CATALYTIC ACTIVITY</scope>
</reference>
<protein>
    <recommendedName>
        <fullName>3-oxoadipyl-CoA/3-oxo-5,6-dehydrosuberyl-CoA thiolase</fullName>
        <ecNumber evidence="5 6">2.3.1.174</ecNumber>
        <ecNumber evidence="5 6">2.3.1.223</ecNumber>
    </recommendedName>
</protein>
<name>PAAJ_ECOLI</name>
<accession>P0C7L2</accession>
<accession>O53017</accession>
<accession>P77525</accession>
<keyword id="KW-0012">Acyltransferase</keyword>
<keyword id="KW-1185">Reference proteome</keyword>
<keyword id="KW-0808">Transferase</keyword>
<gene>
    <name type="primary">paaJ</name>
    <name type="synonym">paaE</name>
    <name type="synonym">ydbW</name>
    <name type="ordered locus">b1397</name>
    <name type="ordered locus">JW1392</name>
</gene>
<proteinExistence type="evidence at protein level"/>